<dbReference type="EC" id="2.5.1.6" evidence="5"/>
<dbReference type="EMBL" id="AF321001">
    <property type="protein sequence ID" value="AAG42490.1"/>
    <property type="molecule type" value="mRNA"/>
</dbReference>
<dbReference type="SMR" id="Q9FPL6"/>
<dbReference type="UniPathway" id="UPA00315">
    <property type="reaction ID" value="UER00080"/>
</dbReference>
<dbReference type="GO" id="GO:0005737">
    <property type="term" value="C:cytoplasm"/>
    <property type="evidence" value="ECO:0007669"/>
    <property type="project" value="UniProtKB-SubCell"/>
</dbReference>
<dbReference type="GO" id="GO:0005524">
    <property type="term" value="F:ATP binding"/>
    <property type="evidence" value="ECO:0007669"/>
    <property type="project" value="UniProtKB-KW"/>
</dbReference>
<dbReference type="GO" id="GO:0046872">
    <property type="term" value="F:metal ion binding"/>
    <property type="evidence" value="ECO:0007669"/>
    <property type="project" value="UniProtKB-KW"/>
</dbReference>
<dbReference type="GO" id="GO:0004478">
    <property type="term" value="F:methionine adenosyltransferase activity"/>
    <property type="evidence" value="ECO:0007669"/>
    <property type="project" value="UniProtKB-EC"/>
</dbReference>
<dbReference type="GO" id="GO:0006730">
    <property type="term" value="P:one-carbon metabolic process"/>
    <property type="evidence" value="ECO:0007669"/>
    <property type="project" value="UniProtKB-KW"/>
</dbReference>
<dbReference type="GO" id="GO:0006556">
    <property type="term" value="P:S-adenosylmethionine biosynthetic process"/>
    <property type="evidence" value="ECO:0007669"/>
    <property type="project" value="UniProtKB-UniPathway"/>
</dbReference>
<dbReference type="CDD" id="cd18079">
    <property type="entry name" value="S-AdoMet_synt"/>
    <property type="match status" value="1"/>
</dbReference>
<dbReference type="FunFam" id="3.30.300.10:FF:000001">
    <property type="entry name" value="S-adenosylmethionine synthase"/>
    <property type="match status" value="1"/>
</dbReference>
<dbReference type="FunFam" id="3.30.300.10:FF:000003">
    <property type="entry name" value="S-adenosylmethionine synthase"/>
    <property type="match status" value="1"/>
</dbReference>
<dbReference type="FunFam" id="3.30.300.10:FF:000004">
    <property type="entry name" value="S-adenosylmethionine synthase"/>
    <property type="match status" value="1"/>
</dbReference>
<dbReference type="Gene3D" id="3.30.300.10">
    <property type="match status" value="3"/>
</dbReference>
<dbReference type="HAMAP" id="MF_00086">
    <property type="entry name" value="S_AdoMet_synth1"/>
    <property type="match status" value="1"/>
</dbReference>
<dbReference type="InterPro" id="IPR022631">
    <property type="entry name" value="ADOMET_SYNTHASE_CS"/>
</dbReference>
<dbReference type="InterPro" id="IPR022630">
    <property type="entry name" value="S-AdoMet_synt_C"/>
</dbReference>
<dbReference type="InterPro" id="IPR022629">
    <property type="entry name" value="S-AdoMet_synt_central"/>
</dbReference>
<dbReference type="InterPro" id="IPR022628">
    <property type="entry name" value="S-AdoMet_synt_N"/>
</dbReference>
<dbReference type="InterPro" id="IPR002133">
    <property type="entry name" value="S-AdoMet_synthetase"/>
</dbReference>
<dbReference type="InterPro" id="IPR022636">
    <property type="entry name" value="S-AdoMet_synthetase_sfam"/>
</dbReference>
<dbReference type="NCBIfam" id="TIGR01034">
    <property type="entry name" value="metK"/>
    <property type="match status" value="1"/>
</dbReference>
<dbReference type="PANTHER" id="PTHR11964">
    <property type="entry name" value="S-ADENOSYLMETHIONINE SYNTHETASE"/>
    <property type="match status" value="1"/>
</dbReference>
<dbReference type="Pfam" id="PF02773">
    <property type="entry name" value="S-AdoMet_synt_C"/>
    <property type="match status" value="1"/>
</dbReference>
<dbReference type="Pfam" id="PF02772">
    <property type="entry name" value="S-AdoMet_synt_M"/>
    <property type="match status" value="1"/>
</dbReference>
<dbReference type="Pfam" id="PF00438">
    <property type="entry name" value="S-AdoMet_synt_N"/>
    <property type="match status" value="1"/>
</dbReference>
<dbReference type="PIRSF" id="PIRSF000497">
    <property type="entry name" value="MAT"/>
    <property type="match status" value="1"/>
</dbReference>
<dbReference type="SUPFAM" id="SSF55973">
    <property type="entry name" value="S-adenosylmethionine synthetase"/>
    <property type="match status" value="3"/>
</dbReference>
<dbReference type="PROSITE" id="PS00376">
    <property type="entry name" value="ADOMET_SYNTHASE_1"/>
    <property type="match status" value="1"/>
</dbReference>
<dbReference type="PROSITE" id="PS00377">
    <property type="entry name" value="ADOMET_SYNTHASE_2"/>
    <property type="match status" value="1"/>
</dbReference>
<keyword id="KW-0067">ATP-binding</keyword>
<keyword id="KW-0170">Cobalt</keyword>
<keyword id="KW-0963">Cytoplasm</keyword>
<keyword id="KW-0460">Magnesium</keyword>
<keyword id="KW-0479">Metal-binding</keyword>
<keyword id="KW-0547">Nucleotide-binding</keyword>
<keyword id="KW-0554">One-carbon metabolism</keyword>
<keyword id="KW-0630">Potassium</keyword>
<keyword id="KW-0808">Transferase</keyword>
<name>METK2_SUASA</name>
<proteinExistence type="evidence at transcript level"/>
<organism>
    <name type="scientific">Suaeda salsa</name>
    <name type="common">Seepweed</name>
    <name type="synonym">Chenopodium salsum</name>
    <dbReference type="NCBI Taxonomy" id="126914"/>
    <lineage>
        <taxon>Eukaryota</taxon>
        <taxon>Viridiplantae</taxon>
        <taxon>Streptophyta</taxon>
        <taxon>Embryophyta</taxon>
        <taxon>Tracheophyta</taxon>
        <taxon>Spermatophyta</taxon>
        <taxon>Magnoliopsida</taxon>
        <taxon>eudicotyledons</taxon>
        <taxon>Gunneridae</taxon>
        <taxon>Pentapetalae</taxon>
        <taxon>Caryophyllales</taxon>
        <taxon>Chenopodiaceae</taxon>
        <taxon>Suaedoideae</taxon>
        <taxon>Suaeda</taxon>
    </lineage>
</organism>
<sequence length="395" mass="43009">MESFLFTSESVNEGHPDKLCDQVSDAVLDACLAQDPDSKVACETCTKTNMVMVFGEITTKANIDYEKIVRDTCRSIGFVSADVGLDADNCKVLVNIEQQSPDIAQGVHGHLTKRPEDVGAGDQGHMFGYATDETPELMPLSHVLATKLGARLTEVRKNGTCAWLRPDGKTQVTVEYNNDNGAMVPIRVHTVLISTQHDETVTNEQIAADLKEHVIKPVIPEKYLDDKTIFHLNPSGRFVIGGPHGDAGLTGRKIIIDTYGGWGAHGGGAFSGKDPTKVDRSGAYIVRQAAKSIVANGLARRAIVQVSYAIGVPEPLSVFVDTYGTGKIPDKDILKIVKENFDFRPGMISINLDLKRGGNARFQKTAAYGHFGRDDPDFTWETVKPLKWEKVPASS</sequence>
<evidence type="ECO:0000250" key="1"/>
<evidence type="ECO:0000250" key="2">
    <source>
        <dbReference type="UniProtKB" id="P0A817"/>
    </source>
</evidence>
<evidence type="ECO:0000250" key="3">
    <source>
        <dbReference type="UniProtKB" id="P13444"/>
    </source>
</evidence>
<evidence type="ECO:0000250" key="4">
    <source>
        <dbReference type="UniProtKB" id="Q00266"/>
    </source>
</evidence>
<evidence type="ECO:0000250" key="5">
    <source>
        <dbReference type="UniProtKB" id="Q96551"/>
    </source>
</evidence>
<evidence type="ECO:0000305" key="6"/>
<accession>Q9FPL6</accession>
<feature type="chain" id="PRO_0000363050" description="S-adenosylmethionine synthase 2">
    <location>
        <begin position="1"/>
        <end position="395"/>
    </location>
</feature>
<feature type="binding site" evidence="3">
    <location>
        <position position="9"/>
    </location>
    <ligand>
        <name>Mg(2+)</name>
        <dbReference type="ChEBI" id="CHEBI:18420"/>
    </ligand>
</feature>
<feature type="binding site" description="in other chain" evidence="4">
    <location>
        <position position="15"/>
    </location>
    <ligand>
        <name>ATP</name>
        <dbReference type="ChEBI" id="CHEBI:30616"/>
        <note>ligand shared between two neighboring subunits</note>
    </ligand>
</feature>
<feature type="binding site" evidence="2">
    <location>
        <position position="43"/>
    </location>
    <ligand>
        <name>K(+)</name>
        <dbReference type="ChEBI" id="CHEBI:29103"/>
    </ligand>
</feature>
<feature type="binding site" description="in other chain" evidence="2">
    <location>
        <position position="56"/>
    </location>
    <ligand>
        <name>L-methionine</name>
        <dbReference type="ChEBI" id="CHEBI:57844"/>
        <note>ligand shared between two neighboring subunits</note>
    </ligand>
</feature>
<feature type="binding site" description="in other chain" evidence="2">
    <location>
        <position position="99"/>
    </location>
    <ligand>
        <name>L-methionine</name>
        <dbReference type="ChEBI" id="CHEBI:57844"/>
        <note>ligand shared between two neighboring subunits</note>
    </ligand>
</feature>
<feature type="binding site" description="in other chain" evidence="4">
    <location>
        <begin position="167"/>
        <end position="169"/>
    </location>
    <ligand>
        <name>ATP</name>
        <dbReference type="ChEBI" id="CHEBI:30616"/>
        <note>ligand shared between two neighboring subunits</note>
    </ligand>
</feature>
<feature type="binding site" description="in other chain" evidence="4">
    <location>
        <begin position="235"/>
        <end position="238"/>
    </location>
    <ligand>
        <name>ATP</name>
        <dbReference type="ChEBI" id="CHEBI:30616"/>
        <note>ligand shared between two neighboring subunits</note>
    </ligand>
</feature>
<feature type="binding site" description="in other chain" evidence="4">
    <location>
        <position position="246"/>
    </location>
    <ligand>
        <name>ATP</name>
        <dbReference type="ChEBI" id="CHEBI:30616"/>
        <note>ligand shared between two neighboring subunits</note>
    </ligand>
</feature>
<feature type="binding site" evidence="2">
    <location>
        <position position="246"/>
    </location>
    <ligand>
        <name>L-methionine</name>
        <dbReference type="ChEBI" id="CHEBI:57844"/>
        <note>ligand shared between two neighboring subunits</note>
    </ligand>
</feature>
<feature type="binding site" description="in other chain" evidence="2">
    <location>
        <begin position="252"/>
        <end position="253"/>
    </location>
    <ligand>
        <name>ATP</name>
        <dbReference type="ChEBI" id="CHEBI:30616"/>
        <note>ligand shared between two neighboring subunits</note>
    </ligand>
</feature>
<feature type="binding site" evidence="2">
    <location>
        <position position="269"/>
    </location>
    <ligand>
        <name>ATP</name>
        <dbReference type="ChEBI" id="CHEBI:30616"/>
        <note>ligand shared between two neighboring subunits</note>
    </ligand>
</feature>
<feature type="binding site" evidence="2">
    <location>
        <position position="273"/>
    </location>
    <ligand>
        <name>ATP</name>
        <dbReference type="ChEBI" id="CHEBI:30616"/>
        <note>ligand shared between two neighboring subunits</note>
    </ligand>
</feature>
<feature type="binding site" evidence="3">
    <location>
        <position position="277"/>
    </location>
    <ligand>
        <name>ATP</name>
        <dbReference type="ChEBI" id="CHEBI:30616"/>
        <note>ligand shared between two neighboring subunits</note>
    </ligand>
</feature>
<feature type="binding site" description="in other chain" evidence="2">
    <location>
        <position position="277"/>
    </location>
    <ligand>
        <name>L-methionine</name>
        <dbReference type="ChEBI" id="CHEBI:57844"/>
        <note>ligand shared between two neighboring subunits</note>
    </ligand>
</feature>
<gene>
    <name type="primary">METK2</name>
</gene>
<reference key="1">
    <citation type="submission" date="2000-11" db="EMBL/GenBank/DDBJ databases">
        <authorList>
            <person name="Ma X."/>
            <person name="Zhang H."/>
        </authorList>
    </citation>
    <scope>NUCLEOTIDE SEQUENCE [MRNA]</scope>
</reference>
<comment type="function">
    <text evidence="5">Catalyzes the formation of S-adenosylmethionine from methionine and ATP. The reaction comprises two steps that are both catalyzed by the same enzyme: formation of S-adenosylmethionine (AdoMet) and triphosphate, and subsequent hydrolysis of the triphosphate.</text>
</comment>
<comment type="catalytic activity">
    <reaction evidence="5">
        <text>L-methionine + ATP + H2O = S-adenosyl-L-methionine + phosphate + diphosphate</text>
        <dbReference type="Rhea" id="RHEA:21080"/>
        <dbReference type="ChEBI" id="CHEBI:15377"/>
        <dbReference type="ChEBI" id="CHEBI:30616"/>
        <dbReference type="ChEBI" id="CHEBI:33019"/>
        <dbReference type="ChEBI" id="CHEBI:43474"/>
        <dbReference type="ChEBI" id="CHEBI:57844"/>
        <dbReference type="ChEBI" id="CHEBI:59789"/>
        <dbReference type="EC" id="2.5.1.6"/>
    </reaction>
</comment>
<comment type="cofactor">
    <cofactor evidence="5">
        <name>Mn(2+)</name>
        <dbReference type="ChEBI" id="CHEBI:29035"/>
    </cofactor>
    <cofactor evidence="5">
        <name>Mg(2+)</name>
        <dbReference type="ChEBI" id="CHEBI:18420"/>
    </cofactor>
    <cofactor evidence="5">
        <name>Co(2+)</name>
        <dbReference type="ChEBI" id="CHEBI:48828"/>
    </cofactor>
    <text evidence="3 5">Binds 2 divalent ions per subunit. The metal ions interact primarily with the substrate (By similarity). Can utilize magnesium, manganese or cobalt (in vitro) (By similarity).</text>
</comment>
<comment type="cofactor">
    <cofactor evidence="5">
        <name>K(+)</name>
        <dbReference type="ChEBI" id="CHEBI:29103"/>
    </cofactor>
    <text evidence="3">Binds 1 potassium ion per subunit. The potassium ion interacts primarily with the substrate (By similarity).</text>
</comment>
<comment type="pathway">
    <text evidence="5">Amino-acid biosynthesis; S-adenosyl-L-methionine biosynthesis; S-adenosyl-L-methionine from L-methionine: step 1/1.</text>
</comment>
<comment type="subunit">
    <text evidence="1">Homotetramer.</text>
</comment>
<comment type="subcellular location">
    <subcellularLocation>
        <location evidence="1">Cytoplasm</location>
    </subcellularLocation>
</comment>
<comment type="similarity">
    <text evidence="6">Belongs to the AdoMet synthase family.</text>
</comment>
<protein>
    <recommendedName>
        <fullName>S-adenosylmethionine synthase 2</fullName>
        <shortName>AdoMet synthase 2</shortName>
        <ecNumber evidence="5">2.5.1.6</ecNumber>
    </recommendedName>
    <alternativeName>
        <fullName>Methionine adenosyltransferase 2</fullName>
        <shortName>MAT 2</shortName>
    </alternativeName>
</protein>